<reference key="1">
    <citation type="book" date="2006" name="Texas Tech University Special Publications">
        <title>Molecular and morphological analyses of the sportive lemurs (family Megaladapidae: genus Lepilemur) reveals 11 previously unrecognized species.</title>
        <editorList>
            <person name="Baker R.J."/>
        </editorList>
        <authorList>
            <person name="Louis E.E. Jr."/>
            <person name="Engberg S.E."/>
            <person name="Lei R."/>
            <person name="Geng H."/>
            <person name="Sommer J.A."/>
            <person name="Randriamampionona R."/>
            <person name="Randriamanana J.C."/>
            <person name="Zaonarivelo J.R."/>
            <person name="Andriantompohavana R."/>
            <person name="Randria G."/>
            <person name="Ramaromilanto B."/>
            <person name="Rakotoarisoa G."/>
            <person name="Rooney A."/>
            <person name="Brenneman R.A."/>
        </authorList>
    </citation>
    <scope>NUCLEOTIDE SEQUENCE [GENOMIC DNA]</scope>
    <source>
        <strain>Isolate LAZA5.01</strain>
        <strain>Isolate LAZA5.10</strain>
    </source>
</reference>
<gene>
    <name type="primary">MT-ND4L</name>
    <name type="synonym">MTND4L</name>
    <name type="synonym">NADH4L</name>
    <name type="synonym">ND4L</name>
</gene>
<comment type="function">
    <text evidence="1">Core subunit of the mitochondrial membrane respiratory chain NADH dehydrogenase (Complex I) which catalyzes electron transfer from NADH through the respiratory chain, using ubiquinone as an electron acceptor. Part of the enzyme membrane arm which is embedded in the lipid bilayer and involved in proton translocation.</text>
</comment>
<comment type="catalytic activity">
    <reaction evidence="1">
        <text>a ubiquinone + NADH + 5 H(+)(in) = a ubiquinol + NAD(+) + 4 H(+)(out)</text>
        <dbReference type="Rhea" id="RHEA:29091"/>
        <dbReference type="Rhea" id="RHEA-COMP:9565"/>
        <dbReference type="Rhea" id="RHEA-COMP:9566"/>
        <dbReference type="ChEBI" id="CHEBI:15378"/>
        <dbReference type="ChEBI" id="CHEBI:16389"/>
        <dbReference type="ChEBI" id="CHEBI:17976"/>
        <dbReference type="ChEBI" id="CHEBI:57540"/>
        <dbReference type="ChEBI" id="CHEBI:57945"/>
        <dbReference type="EC" id="7.1.1.2"/>
    </reaction>
    <physiologicalReaction direction="left-to-right" evidence="1">
        <dbReference type="Rhea" id="RHEA:29092"/>
    </physiologicalReaction>
</comment>
<comment type="subunit">
    <text evidence="2">Core subunit of respiratory chain NADH dehydrogenase (Complex I) which is composed of 45 different subunits.</text>
</comment>
<comment type="subcellular location">
    <subcellularLocation>
        <location evidence="2">Mitochondrion inner membrane</location>
        <topology evidence="3">Multi-pass membrane protein</topology>
    </subcellularLocation>
</comment>
<comment type="similarity">
    <text evidence="4">Belongs to the complex I subunit 4L family.</text>
</comment>
<feature type="chain" id="PRO_0000275040" description="NADH-ubiquinone oxidoreductase chain 4L">
    <location>
        <begin position="1"/>
        <end position="98"/>
    </location>
</feature>
<feature type="transmembrane region" description="Helical" evidence="3">
    <location>
        <begin position="2"/>
        <end position="22"/>
    </location>
</feature>
<feature type="transmembrane region" description="Helical" evidence="3">
    <location>
        <begin position="29"/>
        <end position="49"/>
    </location>
</feature>
<feature type="transmembrane region" description="Helical" evidence="3">
    <location>
        <begin position="61"/>
        <end position="81"/>
    </location>
</feature>
<protein>
    <recommendedName>
        <fullName>NADH-ubiquinone oxidoreductase chain 4L</fullName>
        <ecNumber>7.1.1.2</ecNumber>
    </recommendedName>
    <alternativeName>
        <fullName>NADH dehydrogenase subunit 4L</fullName>
    </alternativeName>
</protein>
<name>NU4LM_LEPSH</name>
<sequence>MPSISTNITLAFTIALTGMLVFRSHLMSSLLCLEGMMLAMFILSILFIMNLHYTVSFIMPILLLVLAACEAAIGLALLVMVSNTYGLDHIQNLNLLQC</sequence>
<accession>Q00GQ9</accession>
<keyword id="KW-0249">Electron transport</keyword>
<keyword id="KW-0472">Membrane</keyword>
<keyword id="KW-0496">Mitochondrion</keyword>
<keyword id="KW-0999">Mitochondrion inner membrane</keyword>
<keyword id="KW-0520">NAD</keyword>
<keyword id="KW-0679">Respiratory chain</keyword>
<keyword id="KW-1278">Translocase</keyword>
<keyword id="KW-0812">Transmembrane</keyword>
<keyword id="KW-1133">Transmembrane helix</keyword>
<keyword id="KW-0813">Transport</keyword>
<keyword id="KW-0830">Ubiquinone</keyword>
<dbReference type="EC" id="7.1.1.2"/>
<dbReference type="EMBL" id="DQ529737">
    <property type="protein sequence ID" value="ABG74266.1"/>
    <property type="molecule type" value="Genomic_DNA"/>
</dbReference>
<dbReference type="EMBL" id="DQ529738">
    <property type="protein sequence ID" value="ABG74270.1"/>
    <property type="molecule type" value="Genomic_DNA"/>
</dbReference>
<dbReference type="SMR" id="Q00GQ9"/>
<dbReference type="GO" id="GO:0005743">
    <property type="term" value="C:mitochondrial inner membrane"/>
    <property type="evidence" value="ECO:0000250"/>
    <property type="project" value="UniProtKB"/>
</dbReference>
<dbReference type="GO" id="GO:0045271">
    <property type="term" value="C:respiratory chain complex I"/>
    <property type="evidence" value="ECO:0000250"/>
    <property type="project" value="UniProtKB"/>
</dbReference>
<dbReference type="GO" id="GO:0008137">
    <property type="term" value="F:NADH dehydrogenase (ubiquinone) activity"/>
    <property type="evidence" value="ECO:0000250"/>
    <property type="project" value="UniProtKB"/>
</dbReference>
<dbReference type="GO" id="GO:0042773">
    <property type="term" value="P:ATP synthesis coupled electron transport"/>
    <property type="evidence" value="ECO:0007669"/>
    <property type="project" value="InterPro"/>
</dbReference>
<dbReference type="FunFam" id="1.10.287.3510:FF:000002">
    <property type="entry name" value="NADH-ubiquinone oxidoreductase chain 4L"/>
    <property type="match status" value="1"/>
</dbReference>
<dbReference type="Gene3D" id="1.10.287.3510">
    <property type="match status" value="1"/>
</dbReference>
<dbReference type="InterPro" id="IPR001133">
    <property type="entry name" value="NADH_UbQ_OxRdtase_chain4L/K"/>
</dbReference>
<dbReference type="InterPro" id="IPR039428">
    <property type="entry name" value="NUOK/Mnh_C1-like"/>
</dbReference>
<dbReference type="PANTHER" id="PTHR11434:SF0">
    <property type="entry name" value="NADH-UBIQUINONE OXIDOREDUCTASE CHAIN 4L"/>
    <property type="match status" value="1"/>
</dbReference>
<dbReference type="PANTHER" id="PTHR11434">
    <property type="entry name" value="NADH-UBIQUINONE OXIDOREDUCTASE SUBUNIT ND4L"/>
    <property type="match status" value="1"/>
</dbReference>
<dbReference type="Pfam" id="PF00420">
    <property type="entry name" value="Oxidored_q2"/>
    <property type="match status" value="1"/>
</dbReference>
<evidence type="ECO:0000250" key="1">
    <source>
        <dbReference type="UniProtKB" id="P03901"/>
    </source>
</evidence>
<evidence type="ECO:0000250" key="2">
    <source>
        <dbReference type="UniProtKB" id="P03902"/>
    </source>
</evidence>
<evidence type="ECO:0000255" key="3"/>
<evidence type="ECO:0000305" key="4"/>
<organism>
    <name type="scientific">Lepilemur sahamalazensis</name>
    <name type="common">Sahamalaza sportive lemur</name>
    <dbReference type="NCBI Taxonomy" id="342398"/>
    <lineage>
        <taxon>Eukaryota</taxon>
        <taxon>Metazoa</taxon>
        <taxon>Chordata</taxon>
        <taxon>Craniata</taxon>
        <taxon>Vertebrata</taxon>
        <taxon>Euteleostomi</taxon>
        <taxon>Mammalia</taxon>
        <taxon>Eutheria</taxon>
        <taxon>Euarchontoglires</taxon>
        <taxon>Primates</taxon>
        <taxon>Strepsirrhini</taxon>
        <taxon>Lemuriformes</taxon>
        <taxon>Lepilemuridae</taxon>
        <taxon>Lepilemur</taxon>
    </lineage>
</organism>
<proteinExistence type="inferred from homology"/>
<geneLocation type="mitochondrion"/>